<proteinExistence type="evidence at protein level"/>
<protein>
    <recommendedName>
        <fullName evidence="1">Large ribosomal subunit protein uL15</fullName>
    </recommendedName>
    <alternativeName>
        <fullName evidence="3">50S ribosomal protein L15</fullName>
    </alternativeName>
</protein>
<organism>
    <name type="scientific">Borreliella burgdorferi (strain ATCC 35210 / DSM 4680 / CIP 102532 / B31)</name>
    <name type="common">Borrelia burgdorferi</name>
    <dbReference type="NCBI Taxonomy" id="224326"/>
    <lineage>
        <taxon>Bacteria</taxon>
        <taxon>Pseudomonadati</taxon>
        <taxon>Spirochaetota</taxon>
        <taxon>Spirochaetia</taxon>
        <taxon>Spirochaetales</taxon>
        <taxon>Borreliaceae</taxon>
        <taxon>Borreliella</taxon>
    </lineage>
</organism>
<sequence length="145" mass="16039">MFNLLKPKGASKRRKIVGRGPGSGLGKTSGRGQKGQKARNTSPRLGFEGGQTPLYRRLPRKGFSNSDYKLEYAIVNLGDIDKKFKDGQVVNYDTLLENKLIKKKNKKIKILSNGKLTKKVSFEVSKISKSAESLVIKIGCTIQLV</sequence>
<feature type="chain" id="PRO_0000104687" description="Large ribosomal subunit protein uL15">
    <location>
        <begin position="1"/>
        <end position="145"/>
    </location>
</feature>
<feature type="region of interest" description="Disordered" evidence="2">
    <location>
        <begin position="1"/>
        <end position="52"/>
    </location>
</feature>
<feature type="compositionally biased region" description="Gly residues" evidence="2">
    <location>
        <begin position="19"/>
        <end position="33"/>
    </location>
</feature>
<feature type="turn" evidence="4">
    <location>
        <begin position="27"/>
        <end position="30"/>
    </location>
</feature>
<feature type="strand" evidence="4">
    <location>
        <begin position="33"/>
        <end position="36"/>
    </location>
</feature>
<feature type="helix" evidence="4">
    <location>
        <begin position="37"/>
        <end position="39"/>
    </location>
</feature>
<feature type="turn" evidence="4">
    <location>
        <begin position="44"/>
        <end position="46"/>
    </location>
</feature>
<feature type="helix" evidence="4">
    <location>
        <begin position="54"/>
        <end position="57"/>
    </location>
</feature>
<feature type="strand" evidence="4">
    <location>
        <begin position="74"/>
        <end position="76"/>
    </location>
</feature>
<feature type="helix" evidence="4">
    <location>
        <begin position="77"/>
        <end position="83"/>
    </location>
</feature>
<feature type="strand" evidence="4">
    <location>
        <begin position="88"/>
        <end position="91"/>
    </location>
</feature>
<feature type="helix" evidence="4">
    <location>
        <begin position="92"/>
        <end position="97"/>
    </location>
</feature>
<feature type="strand" evidence="4">
    <location>
        <begin position="109"/>
        <end position="111"/>
    </location>
</feature>
<feature type="strand" evidence="4">
    <location>
        <begin position="121"/>
        <end position="127"/>
    </location>
</feature>
<feature type="helix" evidence="4">
    <location>
        <begin position="129"/>
        <end position="138"/>
    </location>
</feature>
<feature type="strand" evidence="4">
    <location>
        <begin position="141"/>
        <end position="144"/>
    </location>
</feature>
<name>RL15_BORBU</name>
<keyword id="KW-0002">3D-structure</keyword>
<keyword id="KW-1185">Reference proteome</keyword>
<keyword id="KW-0687">Ribonucleoprotein</keyword>
<keyword id="KW-0689">Ribosomal protein</keyword>
<keyword id="KW-0694">RNA-binding</keyword>
<keyword id="KW-0699">rRNA-binding</keyword>
<accession>O51450</accession>
<evidence type="ECO:0000255" key="1">
    <source>
        <dbReference type="HAMAP-Rule" id="MF_01341"/>
    </source>
</evidence>
<evidence type="ECO:0000256" key="2">
    <source>
        <dbReference type="SAM" id="MobiDB-lite"/>
    </source>
</evidence>
<evidence type="ECO:0000305" key="3"/>
<evidence type="ECO:0007829" key="4">
    <source>
        <dbReference type="PDB" id="8FN2"/>
    </source>
</evidence>
<dbReference type="EMBL" id="AE000783">
    <property type="protein sequence ID" value="AAC66845.1"/>
    <property type="molecule type" value="Genomic_DNA"/>
</dbReference>
<dbReference type="PIR" id="H70161">
    <property type="entry name" value="H70161"/>
</dbReference>
<dbReference type="RefSeq" id="NP_212631.1">
    <property type="nucleotide sequence ID" value="NC_001318.1"/>
</dbReference>
<dbReference type="RefSeq" id="WP_002656004.1">
    <property type="nucleotide sequence ID" value="NC_001318.1"/>
</dbReference>
<dbReference type="PDB" id="8FMW">
    <property type="method" value="EM"/>
    <property type="resolution" value="2.86 A"/>
    <property type="chains" value="AN=1-145"/>
</dbReference>
<dbReference type="PDB" id="8FN2">
    <property type="method" value="EM"/>
    <property type="resolution" value="3.40 A"/>
    <property type="chains" value="N=1-145"/>
</dbReference>
<dbReference type="PDBsum" id="8FMW"/>
<dbReference type="PDBsum" id="8FN2"/>
<dbReference type="EMDB" id="EMD-29298"/>
<dbReference type="EMDB" id="EMD-29304"/>
<dbReference type="SMR" id="O51450"/>
<dbReference type="STRING" id="224326.BB_0497"/>
<dbReference type="PaxDb" id="224326-BB_0497"/>
<dbReference type="EnsemblBacteria" id="AAC66845">
    <property type="protein sequence ID" value="AAC66845"/>
    <property type="gene ID" value="BB_0497"/>
</dbReference>
<dbReference type="GeneID" id="56567932"/>
<dbReference type="KEGG" id="bbu:BB_0497"/>
<dbReference type="PATRIC" id="fig|224326.49.peg.888"/>
<dbReference type="HOGENOM" id="CLU_055188_4_2_12"/>
<dbReference type="OrthoDB" id="9810293at2"/>
<dbReference type="Proteomes" id="UP000001807">
    <property type="component" value="Chromosome"/>
</dbReference>
<dbReference type="GO" id="GO:0022625">
    <property type="term" value="C:cytosolic large ribosomal subunit"/>
    <property type="evidence" value="ECO:0007669"/>
    <property type="project" value="TreeGrafter"/>
</dbReference>
<dbReference type="GO" id="GO:0019843">
    <property type="term" value="F:rRNA binding"/>
    <property type="evidence" value="ECO:0007669"/>
    <property type="project" value="UniProtKB-UniRule"/>
</dbReference>
<dbReference type="GO" id="GO:0003735">
    <property type="term" value="F:structural constituent of ribosome"/>
    <property type="evidence" value="ECO:0007669"/>
    <property type="project" value="InterPro"/>
</dbReference>
<dbReference type="GO" id="GO:0006412">
    <property type="term" value="P:translation"/>
    <property type="evidence" value="ECO:0007669"/>
    <property type="project" value="UniProtKB-UniRule"/>
</dbReference>
<dbReference type="Gene3D" id="3.100.10.10">
    <property type="match status" value="1"/>
</dbReference>
<dbReference type="HAMAP" id="MF_01341">
    <property type="entry name" value="Ribosomal_uL15"/>
    <property type="match status" value="1"/>
</dbReference>
<dbReference type="InterPro" id="IPR030878">
    <property type="entry name" value="Ribosomal_uL15"/>
</dbReference>
<dbReference type="InterPro" id="IPR021131">
    <property type="entry name" value="Ribosomal_uL15/eL18"/>
</dbReference>
<dbReference type="InterPro" id="IPR036227">
    <property type="entry name" value="Ribosomal_uL15/eL18_sf"/>
</dbReference>
<dbReference type="InterPro" id="IPR005749">
    <property type="entry name" value="Ribosomal_uL15_bac-type"/>
</dbReference>
<dbReference type="InterPro" id="IPR001196">
    <property type="entry name" value="Ribosomal_uL15_CS"/>
</dbReference>
<dbReference type="NCBIfam" id="TIGR01071">
    <property type="entry name" value="rplO_bact"/>
    <property type="match status" value="1"/>
</dbReference>
<dbReference type="PANTHER" id="PTHR12934">
    <property type="entry name" value="50S RIBOSOMAL PROTEIN L15"/>
    <property type="match status" value="1"/>
</dbReference>
<dbReference type="PANTHER" id="PTHR12934:SF11">
    <property type="entry name" value="LARGE RIBOSOMAL SUBUNIT PROTEIN UL15M"/>
    <property type="match status" value="1"/>
</dbReference>
<dbReference type="Pfam" id="PF00828">
    <property type="entry name" value="Ribosomal_L27A"/>
    <property type="match status" value="1"/>
</dbReference>
<dbReference type="SUPFAM" id="SSF52080">
    <property type="entry name" value="Ribosomal proteins L15p and L18e"/>
    <property type="match status" value="1"/>
</dbReference>
<dbReference type="PROSITE" id="PS00475">
    <property type="entry name" value="RIBOSOMAL_L15"/>
    <property type="match status" value="1"/>
</dbReference>
<gene>
    <name evidence="1" type="primary">rplO</name>
    <name type="ordered locus">BB_0497</name>
</gene>
<comment type="function">
    <text evidence="1">Binds to the 23S rRNA.</text>
</comment>
<comment type="subunit">
    <text evidence="1">Part of the 50S ribosomal subunit.</text>
</comment>
<comment type="similarity">
    <text evidence="1">Belongs to the universal ribosomal protein uL15 family.</text>
</comment>
<reference key="1">
    <citation type="journal article" date="1997" name="Nature">
        <title>Genomic sequence of a Lyme disease spirochaete, Borrelia burgdorferi.</title>
        <authorList>
            <person name="Fraser C.M."/>
            <person name="Casjens S."/>
            <person name="Huang W.M."/>
            <person name="Sutton G.G."/>
            <person name="Clayton R.A."/>
            <person name="Lathigra R."/>
            <person name="White O."/>
            <person name="Ketchum K.A."/>
            <person name="Dodson R.J."/>
            <person name="Hickey E.K."/>
            <person name="Gwinn M.L."/>
            <person name="Dougherty B.A."/>
            <person name="Tomb J.-F."/>
            <person name="Fleischmann R.D."/>
            <person name="Richardson D.L."/>
            <person name="Peterson J.D."/>
            <person name="Kerlavage A.R."/>
            <person name="Quackenbush J."/>
            <person name="Salzberg S.L."/>
            <person name="Hanson M."/>
            <person name="van Vugt R."/>
            <person name="Palmer N."/>
            <person name="Adams M.D."/>
            <person name="Gocayne J.D."/>
            <person name="Weidman J.F."/>
            <person name="Utterback T.R."/>
            <person name="Watthey L."/>
            <person name="McDonald L.A."/>
            <person name="Artiach P."/>
            <person name="Bowman C."/>
            <person name="Garland S.A."/>
            <person name="Fujii C."/>
            <person name="Cotton M.D."/>
            <person name="Horst K."/>
            <person name="Roberts K.M."/>
            <person name="Hatch B."/>
            <person name="Smith H.O."/>
            <person name="Venter J.C."/>
        </authorList>
    </citation>
    <scope>NUCLEOTIDE SEQUENCE [LARGE SCALE GENOMIC DNA]</scope>
    <source>
        <strain>ATCC 35210 / DSM 4680 / CIP 102532 / B31</strain>
    </source>
</reference>